<protein>
    <recommendedName>
        <fullName>CUGBP Elav-like family member 2</fullName>
        <shortName>CELF-2</shortName>
    </recommendedName>
    <alternativeName>
        <fullName>Bruno-like protein 3</fullName>
    </alternativeName>
    <alternativeName>
        <fullName>CUG triplet repeat RNA-binding protein 2</fullName>
        <shortName>CUG-BP2</shortName>
    </alternativeName>
    <alternativeName>
        <fullName>CUG-BP- and ETR-3-like factor 2</fullName>
    </alternativeName>
    <alternativeName>
        <fullName>ELAV-type RNA-binding protein 3</fullName>
        <shortName>ETR-3</shortName>
        <shortName>mETR-3</shortName>
    </alternativeName>
    <alternativeName>
        <fullName>Neuroblastoma apoptosis-related RNA-binding protein</fullName>
        <shortName>mNapor</shortName>
    </alternativeName>
    <alternativeName>
        <fullName>RNA-binding protein BRUNOL-3</fullName>
    </alternativeName>
</protein>
<reference key="1">
    <citation type="journal article" date="1999" name="Gene">
        <title>Developmentally-regulated expression of mNapor encoding an apoptosis-induced ELAV-type RNA binding protein.</title>
        <authorList>
            <person name="Choi D.-K."/>
            <person name="Ito T."/>
            <person name="Tsukahara F."/>
            <person name="Hirai M."/>
            <person name="Sakaki Y."/>
        </authorList>
    </citation>
    <scope>NUCLEOTIDE SEQUENCE [MRNA] (ISOFORMS 1 AND 7)</scope>
    <scope>TISSUE SPECIFICITY</scope>
    <source>
        <tissue>Brain</tissue>
    </source>
</reference>
<reference key="2">
    <citation type="journal article" date="1999" name="Hum. Mol. Genet.">
        <title>Cardiac elav-type RNA-binding protein (ETR-3) binds to RNA CUG repeats expanded in myotonic dystrophy.</title>
        <authorList>
            <person name="Lu X."/>
            <person name="Timchenko N.A."/>
            <person name="Timchenko L.T."/>
        </authorList>
    </citation>
    <scope>NUCLEOTIDE SEQUENCE [MRNA] (ISOFORM 7)</scope>
    <scope>RNA-BINDING</scope>
    <scope>ALTERNATIVE SPLICING</scope>
    <source>
        <strain>C57BL/6 X CBA</strain>
        <tissue>Heart</tissue>
    </source>
</reference>
<reference key="3">
    <citation type="journal article" date="2005" name="Science">
        <title>The transcriptional landscape of the mammalian genome.</title>
        <authorList>
            <person name="Carninci P."/>
            <person name="Kasukawa T."/>
            <person name="Katayama S."/>
            <person name="Gough J."/>
            <person name="Frith M.C."/>
            <person name="Maeda N."/>
            <person name="Oyama R."/>
            <person name="Ravasi T."/>
            <person name="Lenhard B."/>
            <person name="Wells C."/>
            <person name="Kodzius R."/>
            <person name="Shimokawa K."/>
            <person name="Bajic V.B."/>
            <person name="Brenner S.E."/>
            <person name="Batalov S."/>
            <person name="Forrest A.R."/>
            <person name="Zavolan M."/>
            <person name="Davis M.J."/>
            <person name="Wilming L.G."/>
            <person name="Aidinis V."/>
            <person name="Allen J.E."/>
            <person name="Ambesi-Impiombato A."/>
            <person name="Apweiler R."/>
            <person name="Aturaliya R.N."/>
            <person name="Bailey T.L."/>
            <person name="Bansal M."/>
            <person name="Baxter L."/>
            <person name="Beisel K.W."/>
            <person name="Bersano T."/>
            <person name="Bono H."/>
            <person name="Chalk A.M."/>
            <person name="Chiu K.P."/>
            <person name="Choudhary V."/>
            <person name="Christoffels A."/>
            <person name="Clutterbuck D.R."/>
            <person name="Crowe M.L."/>
            <person name="Dalla E."/>
            <person name="Dalrymple B.P."/>
            <person name="de Bono B."/>
            <person name="Della Gatta G."/>
            <person name="di Bernardo D."/>
            <person name="Down T."/>
            <person name="Engstrom P."/>
            <person name="Fagiolini M."/>
            <person name="Faulkner G."/>
            <person name="Fletcher C.F."/>
            <person name="Fukushima T."/>
            <person name="Furuno M."/>
            <person name="Futaki S."/>
            <person name="Gariboldi M."/>
            <person name="Georgii-Hemming P."/>
            <person name="Gingeras T.R."/>
            <person name="Gojobori T."/>
            <person name="Green R.E."/>
            <person name="Gustincich S."/>
            <person name="Harbers M."/>
            <person name="Hayashi Y."/>
            <person name="Hensch T.K."/>
            <person name="Hirokawa N."/>
            <person name="Hill D."/>
            <person name="Huminiecki L."/>
            <person name="Iacono M."/>
            <person name="Ikeo K."/>
            <person name="Iwama A."/>
            <person name="Ishikawa T."/>
            <person name="Jakt M."/>
            <person name="Kanapin A."/>
            <person name="Katoh M."/>
            <person name="Kawasawa Y."/>
            <person name="Kelso J."/>
            <person name="Kitamura H."/>
            <person name="Kitano H."/>
            <person name="Kollias G."/>
            <person name="Krishnan S.P."/>
            <person name="Kruger A."/>
            <person name="Kummerfeld S.K."/>
            <person name="Kurochkin I.V."/>
            <person name="Lareau L.F."/>
            <person name="Lazarevic D."/>
            <person name="Lipovich L."/>
            <person name="Liu J."/>
            <person name="Liuni S."/>
            <person name="McWilliam S."/>
            <person name="Madan Babu M."/>
            <person name="Madera M."/>
            <person name="Marchionni L."/>
            <person name="Matsuda H."/>
            <person name="Matsuzawa S."/>
            <person name="Miki H."/>
            <person name="Mignone F."/>
            <person name="Miyake S."/>
            <person name="Morris K."/>
            <person name="Mottagui-Tabar S."/>
            <person name="Mulder N."/>
            <person name="Nakano N."/>
            <person name="Nakauchi H."/>
            <person name="Ng P."/>
            <person name="Nilsson R."/>
            <person name="Nishiguchi S."/>
            <person name="Nishikawa S."/>
            <person name="Nori F."/>
            <person name="Ohara O."/>
            <person name="Okazaki Y."/>
            <person name="Orlando V."/>
            <person name="Pang K.C."/>
            <person name="Pavan W.J."/>
            <person name="Pavesi G."/>
            <person name="Pesole G."/>
            <person name="Petrovsky N."/>
            <person name="Piazza S."/>
            <person name="Reed J."/>
            <person name="Reid J.F."/>
            <person name="Ring B.Z."/>
            <person name="Ringwald M."/>
            <person name="Rost B."/>
            <person name="Ruan Y."/>
            <person name="Salzberg S.L."/>
            <person name="Sandelin A."/>
            <person name="Schneider C."/>
            <person name="Schoenbach C."/>
            <person name="Sekiguchi K."/>
            <person name="Semple C.A."/>
            <person name="Seno S."/>
            <person name="Sessa L."/>
            <person name="Sheng Y."/>
            <person name="Shibata Y."/>
            <person name="Shimada H."/>
            <person name="Shimada K."/>
            <person name="Silva D."/>
            <person name="Sinclair B."/>
            <person name="Sperling S."/>
            <person name="Stupka E."/>
            <person name="Sugiura K."/>
            <person name="Sultana R."/>
            <person name="Takenaka Y."/>
            <person name="Taki K."/>
            <person name="Tammoja K."/>
            <person name="Tan S.L."/>
            <person name="Tang S."/>
            <person name="Taylor M.S."/>
            <person name="Tegner J."/>
            <person name="Teichmann S.A."/>
            <person name="Ueda H.R."/>
            <person name="van Nimwegen E."/>
            <person name="Verardo R."/>
            <person name="Wei C.L."/>
            <person name="Yagi K."/>
            <person name="Yamanishi H."/>
            <person name="Zabarovsky E."/>
            <person name="Zhu S."/>
            <person name="Zimmer A."/>
            <person name="Hide W."/>
            <person name="Bult C."/>
            <person name="Grimmond S.M."/>
            <person name="Teasdale R.D."/>
            <person name="Liu E.T."/>
            <person name="Brusic V."/>
            <person name="Quackenbush J."/>
            <person name="Wahlestedt C."/>
            <person name="Mattick J.S."/>
            <person name="Hume D.A."/>
            <person name="Kai C."/>
            <person name="Sasaki D."/>
            <person name="Tomaru Y."/>
            <person name="Fukuda S."/>
            <person name="Kanamori-Katayama M."/>
            <person name="Suzuki M."/>
            <person name="Aoki J."/>
            <person name="Arakawa T."/>
            <person name="Iida J."/>
            <person name="Imamura K."/>
            <person name="Itoh M."/>
            <person name="Kato T."/>
            <person name="Kawaji H."/>
            <person name="Kawagashira N."/>
            <person name="Kawashima T."/>
            <person name="Kojima M."/>
            <person name="Kondo S."/>
            <person name="Konno H."/>
            <person name="Nakano K."/>
            <person name="Ninomiya N."/>
            <person name="Nishio T."/>
            <person name="Okada M."/>
            <person name="Plessy C."/>
            <person name="Shibata K."/>
            <person name="Shiraki T."/>
            <person name="Suzuki S."/>
            <person name="Tagami M."/>
            <person name="Waki K."/>
            <person name="Watahiki A."/>
            <person name="Okamura-Oho Y."/>
            <person name="Suzuki H."/>
            <person name="Kawai J."/>
            <person name="Hayashizaki Y."/>
        </authorList>
    </citation>
    <scope>NUCLEOTIDE SEQUENCE [LARGE SCALE MRNA] (ISOFORMS 2; 3; 4; 5 AND 6)</scope>
    <scope>NUCLEOTIDE SEQUENCE [LARGE SCALE MRNA] OF 18-508 (ISOFORM 8)</scope>
    <scope>NUCLEOTIDE SEQUENCE [LARGE SCALE MRNA] OF 18-508 (ISOFORM 11)</scope>
    <source>
        <strain>C57BL/6J</strain>
        <tissue>Bone marrow</tissue>
        <tissue>Brain</tissue>
        <tissue>Lung</tissue>
        <tissue>Testis</tissue>
        <tissue>Urinary bladder</tissue>
    </source>
</reference>
<reference key="4">
    <citation type="journal article" date="2009" name="PLoS Biol.">
        <title>Lineage-specific biology revealed by a finished genome assembly of the mouse.</title>
        <authorList>
            <person name="Church D.M."/>
            <person name="Goodstadt L."/>
            <person name="Hillier L.W."/>
            <person name="Zody M.C."/>
            <person name="Goldstein S."/>
            <person name="She X."/>
            <person name="Bult C.J."/>
            <person name="Agarwala R."/>
            <person name="Cherry J.L."/>
            <person name="DiCuccio M."/>
            <person name="Hlavina W."/>
            <person name="Kapustin Y."/>
            <person name="Meric P."/>
            <person name="Maglott D."/>
            <person name="Birtle Z."/>
            <person name="Marques A.C."/>
            <person name="Graves T."/>
            <person name="Zhou S."/>
            <person name="Teague B."/>
            <person name="Potamousis K."/>
            <person name="Churas C."/>
            <person name="Place M."/>
            <person name="Herschleb J."/>
            <person name="Runnheim R."/>
            <person name="Forrest D."/>
            <person name="Amos-Landgraf J."/>
            <person name="Schwartz D.C."/>
            <person name="Cheng Z."/>
            <person name="Lindblad-Toh K."/>
            <person name="Eichler E.E."/>
            <person name="Ponting C.P."/>
        </authorList>
    </citation>
    <scope>NUCLEOTIDE SEQUENCE [LARGE SCALE GENOMIC DNA]</scope>
    <source>
        <strain>C57BL/6J</strain>
    </source>
</reference>
<reference key="5">
    <citation type="journal article" date="2004" name="Genome Res.">
        <title>The status, quality, and expansion of the NIH full-length cDNA project: the Mammalian Gene Collection (MGC).</title>
        <authorList>
            <consortium name="The MGC Project Team"/>
        </authorList>
    </citation>
    <scope>NUCLEOTIDE SEQUENCE [LARGE SCALE MRNA] (ISOFORM 1)</scope>
    <source>
        <tissue>Eye</tissue>
    </source>
</reference>
<reference key="6">
    <citation type="submission" date="2009-01" db="UniProtKB">
        <authorList>
            <person name="Lubec G."/>
            <person name="Sunyer B."/>
            <person name="Chen W.-Q."/>
        </authorList>
    </citation>
    <scope>PROTEIN SEQUENCE OF 58-73 AND 95-107</scope>
    <scope>IDENTIFICATION BY MASS SPECTROMETRY</scope>
    <source>
        <strain>OF1</strain>
        <tissue>Hippocampus</tissue>
    </source>
</reference>
<reference key="7">
    <citation type="journal article" date="2001" name="Mol. Cell. Biol.">
        <title>The CELF family of RNA binding proteins is implicated in cell-specific and developmentally regulated alternative splicing.</title>
        <authorList>
            <person name="Ladd A.N."/>
            <person name="Charlet-B N."/>
            <person name="Cooper T.A."/>
        </authorList>
    </citation>
    <scope>DEVELOPMENTAL STAGE</scope>
    <scope>TISSUE SPECIFICITY</scope>
</reference>
<reference key="8">
    <citation type="journal article" date="2002" name="RNA">
        <title>Region-specific alternative splicing in the nervous system: implications for regulation by the RNA-binding protein NAPOR.</title>
        <authorList>
            <person name="Zhang W."/>
            <person name="Liu H."/>
            <person name="Han K."/>
            <person name="Grabowski P.J."/>
        </authorList>
    </citation>
    <scope>FUNCTION</scope>
    <scope>RNA-BINDING</scope>
</reference>
<reference key="9">
    <citation type="journal article" date="2003" name="Mol. Cell">
        <title>Coupled mRNA stabilization and translational silencing of cyclooxygenase-2 by a novel RNA binding protein, CUGBP2.</title>
        <authorList>
            <person name="Mukhopadhyay D."/>
            <person name="Houchen C.W."/>
            <person name="Kennedy S."/>
            <person name="Dieckgraefe B.K."/>
            <person name="Anant S."/>
        </authorList>
    </citation>
    <scope>FUNCTION</scope>
    <scope>INDUCTION</scope>
    <scope>SUBCELLULAR LOCATION</scope>
    <scope>RNA-BINDING</scope>
</reference>
<reference key="10">
    <citation type="journal article" date="2004" name="Proc. Natl. Acad. Sci. U.S.A.">
        <title>Dynamic antagonism between RNA-binding protein CUGBP2 and cyclooxygenase-2-mediated prostaglandin E2 in radiation damage.</title>
        <authorList>
            <person name="Murmu N."/>
            <person name="Jung J."/>
            <person name="Mukhopadhyay D."/>
            <person name="Houchen C.W."/>
            <person name="Riehl T.E."/>
            <person name="Stenson W.F."/>
            <person name="Morrison A.R."/>
            <person name="Arumugam T."/>
            <person name="Dieckgraefe B.K."/>
            <person name="Anant S."/>
        </authorList>
    </citation>
    <scope>FUNCTION</scope>
    <scope>RNA-BINDING</scope>
    <scope>INDUCTION</scope>
    <scope>TISSUE SPECIFICITY</scope>
    <scope>SUBCELLULAR LOCATION</scope>
</reference>
<reference key="11">
    <citation type="journal article" date="2005" name="Dev. Dyn.">
        <title>Dynamic balance between activation and repression regulates pre-mRNA alternative splicing during heart development.</title>
        <authorList>
            <person name="Ladd A.N."/>
            <person name="Stenberg M.G."/>
            <person name="Swanson M.S."/>
            <person name="Cooper T.A."/>
        </authorList>
    </citation>
    <scope>SUBCELLULAR LOCATION</scope>
    <scope>TISSUE SPECIFICITY</scope>
    <scope>DEVELOPMENTAL STAGE</scope>
</reference>
<reference key="12">
    <citation type="journal article" date="2010" name="Cell">
        <title>A tissue-specific atlas of mouse protein phosphorylation and expression.</title>
        <authorList>
            <person name="Huttlin E.L."/>
            <person name="Jedrychowski M.P."/>
            <person name="Elias J.E."/>
            <person name="Goswami T."/>
            <person name="Rad R."/>
            <person name="Beausoleil S.A."/>
            <person name="Villen J."/>
            <person name="Haas W."/>
            <person name="Sowa M.E."/>
            <person name="Gygi S.P."/>
        </authorList>
    </citation>
    <scope>IDENTIFICATION BY MASS SPECTROMETRY [LARGE SCALE ANALYSIS]</scope>
    <source>
        <tissue>Brain</tissue>
        <tissue>Heart</tissue>
        <tissue>Lung</tissue>
        <tissue>Spleen</tissue>
        <tissue>Testis</tissue>
    </source>
</reference>
<comment type="function">
    <text evidence="2 6 7 8">RNA-binding protein implicated in the regulation of several post-transcriptional events. Involved in pre-mRNA alternative splicing, mRNA translation and stability. Mediates exon inclusion and/or exclusion in pre-mRNA that are subject to tissue-specific and developmentally regulated alternative splicing (By similarity). Specifically activates exon 5 inclusion of TNNT2 in embryonic, but not adult, skeletal muscle (By similarity). Activates TNNT2 exon 5 inclusion by antagonizing the repressive effect of PTB (By similarity). Acts both as an activator and as a repressor of a pair of coregulated exons: promotes inclusion of the smooth muscle (SM) exon but exclusion of the non-muscle (NM) exon in actinin pre-mRNAs (By similarity). Promotes inclusion of exonS 21 and exclusion of exon 5 of the NMDA receptor R1 pre-mRNA (By similarity). Involved in the apoB RNA editing activity (By similarity). Increases COX2 mRNA stability and inhibits COX2 mRNA translation in epithelial cells after radiation injury. Modulates the cellular apoptosis program by regulating COX2-mediated prostaglandin E2 (PGE2) expression. Binds to (CUG)n triplet repeats in the 3'-UTR of transcripts such as DMPK (By similarity). Binds to the muscle-specific splicing enhancer (MSE) intronic sites flanking the TNNT2 alternative exon 5 (By similarity). Binds preferentially to UG-rich sequences, in particular UG repeat and UGUU motifs (By similarity). Binds to apoB mRNA, specifically to AU-rich sequences located immediately upstream of the edited cytidine (By similarity). Binds AU-rich sequences in the 3'-UTR of COX2 mRNA. Binds to an intronic RNA element responsible for the silencing of exon 21 splicing. Binds to (CUG)n repeats. May be a specific regulator of miRNA biogenesis. Binds to primary microRNA pri-MIR140 and, with CELF1, negatively regulates the processing to mature miRNA (By similarity).</text>
</comment>
<comment type="subunit">
    <text evidence="1">Interacts with A1CF.</text>
</comment>
<comment type="subcellular location">
    <subcellularLocation>
        <location evidence="9">Nucleus</location>
    </subcellularLocation>
    <subcellularLocation>
        <location evidence="9">Cytoplasm</location>
    </subcellularLocation>
    <text evidence="1">Colocalizes with APOBEC1 and A1CF (By similarity). RNA-binding activity is detected in both nuclear and cytoplasmic compartments (By similarity). Accumulates in the cytoplasm after ionizing radiation.</text>
</comment>
<comment type="alternative products">
    <event type="alternative splicing"/>
    <isoform>
        <id>Q9Z0H4-1</id>
        <name>1</name>
        <name>Napor-3</name>
        <sequence type="displayed"/>
    </isoform>
    <isoform>
        <id>Q9Z0H4-2</id>
        <name>2</name>
        <sequence type="described" ref="VSP_026803"/>
    </isoform>
    <isoform>
        <id>Q9Z0H4-3</id>
        <name>3</name>
        <sequence type="described" ref="VSP_026801 VSP_026806"/>
    </isoform>
    <isoform>
        <id>Q9Z0H4-4</id>
        <name>4</name>
        <sequence type="described" ref="VSP_026802 VSP_026805"/>
    </isoform>
    <isoform>
        <id>Q9Z0H4-5</id>
        <name>5</name>
        <sequence type="described" ref="VSP_026802 VSP_026806"/>
    </isoform>
    <isoform>
        <id>Q9Z0H4-6</id>
        <name>6</name>
        <sequence type="described" ref="VSP_026803 VSP_026806"/>
    </isoform>
    <isoform>
        <id>Q9Z0H4-7</id>
        <name>7</name>
        <name>Napor-1</name>
        <sequence type="described" ref="VSP_026802"/>
    </isoform>
    <isoform>
        <id>Q9Z0H4-8</id>
        <name>8</name>
        <sequence type="described" ref="VSP_026806"/>
    </isoform>
    <isoform>
        <id>Q9Z0H4-9</id>
        <name>9</name>
        <sequence type="described" ref="VSP_026804"/>
    </isoform>
    <isoform>
        <id>Q9Z0H4-11</id>
        <name>11</name>
        <sequence type="described" ref="VSP_026806 VSP_026808"/>
    </isoform>
</comment>
<comment type="tissue specificity">
    <text evidence="4 5 8 9">Expressed in tongue, spleen and brain (at protein level). Expressed in liver, thigh, stomach, lung and heart to very low levels (at protein level). Expressed in heart, brain, lung and muscle.</text>
</comment>
<comment type="developmental stage">
    <text evidence="5 9">Expressed in heart, muscle, brain, liver, thigh, stomach and lung at 14 dpc (at protein level). Expressed in embryo at 7, 11 and 17 dpc. Expressed in the developing central nervous system from 12 to 16 dpc.</text>
</comment>
<comment type="induction">
    <text evidence="7 8">Up-regulated following ionizing radiation in the crypt epithelial cells of the intestin. Down-regulated by bacterial lipopolysaccharides (LPS). Down-regulated by prostaglandin E2 following ionizing radiation.</text>
</comment>
<comment type="miscellaneous">
    <molecule>Isoform 9</molecule>
    <text evidence="13">Gene prediction based on similarity to rat ortholog.</text>
</comment>
<comment type="similarity">
    <text evidence="13">Belongs to the CELF/BRUNOL family.</text>
</comment>
<comment type="sequence caution" evidence="13">
    <conflict type="erroneous initiation">
        <sequence resource="EMBL-CDS" id="BAE31371"/>
    </conflict>
    <text>Truncated N-terminus.</text>
</comment>
<comment type="sequence caution" evidence="13">
    <molecule>Isoform 7</molecule>
    <conflict type="frameshift">
        <sequence resource="EMBL-CDS" id="CAA77110"/>
    </conflict>
</comment>
<dbReference type="EMBL" id="AF090696">
    <property type="protein sequence ID" value="AAD13763.1"/>
    <property type="molecule type" value="mRNA"/>
</dbReference>
<dbReference type="EMBL" id="AF090697">
    <property type="protein sequence ID" value="AAD13764.1"/>
    <property type="molecule type" value="mRNA"/>
</dbReference>
<dbReference type="EMBL" id="Y18298">
    <property type="protein sequence ID" value="CAA77110.1"/>
    <property type="status" value="ALT_FRAME"/>
    <property type="molecule type" value="mRNA"/>
</dbReference>
<dbReference type="EMBL" id="AK137292">
    <property type="protein sequence ID" value="BAE23295.1"/>
    <property type="molecule type" value="mRNA"/>
</dbReference>
<dbReference type="EMBL" id="AK151818">
    <property type="protein sequence ID" value="BAE30715.1"/>
    <property type="molecule type" value="mRNA"/>
</dbReference>
<dbReference type="EMBL" id="AK152628">
    <property type="protein sequence ID" value="BAE31371.1"/>
    <property type="status" value="ALT_INIT"/>
    <property type="molecule type" value="mRNA"/>
</dbReference>
<dbReference type="EMBL" id="AK153267">
    <property type="protein sequence ID" value="BAE31857.1"/>
    <property type="molecule type" value="mRNA"/>
</dbReference>
<dbReference type="EMBL" id="AK160861">
    <property type="protein sequence ID" value="BAE36053.1"/>
    <property type="molecule type" value="mRNA"/>
</dbReference>
<dbReference type="EMBL" id="AK161349">
    <property type="protein sequence ID" value="BAE36341.1"/>
    <property type="molecule type" value="mRNA"/>
</dbReference>
<dbReference type="EMBL" id="AK164914">
    <property type="protein sequence ID" value="BAE37963.1"/>
    <property type="molecule type" value="mRNA"/>
</dbReference>
<dbReference type="EMBL" id="AL845492">
    <property type="status" value="NOT_ANNOTATED_CDS"/>
    <property type="molecule type" value="Genomic_DNA"/>
</dbReference>
<dbReference type="EMBL" id="AL845515">
    <property type="status" value="NOT_ANNOTATED_CDS"/>
    <property type="molecule type" value="Genomic_DNA"/>
</dbReference>
<dbReference type="EMBL" id="AL929240">
    <property type="status" value="NOT_ANNOTATED_CDS"/>
    <property type="molecule type" value="Genomic_DNA"/>
</dbReference>
<dbReference type="EMBL" id="BC026856">
    <property type="protein sequence ID" value="AAH26856.1"/>
    <property type="molecule type" value="mRNA"/>
</dbReference>
<dbReference type="CCDS" id="CCDS50491.1">
    <molecule id="Q9Z0H4-7"/>
</dbReference>
<dbReference type="CCDS" id="CCDS50492.1">
    <molecule id="Q9Z0H4-4"/>
</dbReference>
<dbReference type="CCDS" id="CCDS50494.1">
    <molecule id="Q9Z0H4-9"/>
</dbReference>
<dbReference type="CCDS" id="CCDS59633.1">
    <molecule id="Q9Z0H4-2"/>
</dbReference>
<dbReference type="CCDS" id="CCDS84468.1">
    <molecule id="Q9Z0H4-5"/>
</dbReference>
<dbReference type="RefSeq" id="NP_001103698.1">
    <molecule id="Q9Z0H4-9"/>
    <property type="nucleotide sequence ID" value="NM_001110228.1"/>
</dbReference>
<dbReference type="RefSeq" id="NP_001103699.1">
    <molecule id="Q9Z0H4-6"/>
    <property type="nucleotide sequence ID" value="NM_001110229.2"/>
</dbReference>
<dbReference type="RefSeq" id="NP_001103700.1">
    <molecule id="Q9Z0H4-2"/>
    <property type="nucleotide sequence ID" value="NM_001110230.2"/>
</dbReference>
<dbReference type="RefSeq" id="NP_001103701.1">
    <molecule id="Q9Z0H4-4"/>
    <property type="nucleotide sequence ID" value="NM_001110231.2"/>
</dbReference>
<dbReference type="RefSeq" id="NP_001103702.1">
    <molecule id="Q9Z0H4-7"/>
    <property type="nucleotide sequence ID" value="NM_001110232.2"/>
</dbReference>
<dbReference type="RefSeq" id="NP_001153764.1">
    <property type="nucleotide sequence ID" value="NM_001160292.1"/>
</dbReference>
<dbReference type="RefSeq" id="NP_001153765.1">
    <molecule id="Q9Z0H4-9"/>
    <property type="nucleotide sequence ID" value="NM_001160293.1"/>
</dbReference>
<dbReference type="RefSeq" id="NP_001297376.1">
    <property type="nucleotide sequence ID" value="NM_001310447.1"/>
</dbReference>
<dbReference type="RefSeq" id="NP_001334023.1">
    <molecule id="Q9Z0H4-5"/>
    <property type="nucleotide sequence ID" value="NM_001347094.1"/>
</dbReference>
<dbReference type="RefSeq" id="NP_001393762.1">
    <molecule id="Q9Z0H4-7"/>
    <property type="nucleotide sequence ID" value="NM_001406833.1"/>
</dbReference>
<dbReference type="RefSeq" id="NP_001393764.1">
    <molecule id="Q9Z0H4-4"/>
    <property type="nucleotide sequence ID" value="NM_001406835.1"/>
</dbReference>
<dbReference type="RefSeq" id="NP_001393777.1">
    <molecule id="Q9Z0H4-4"/>
    <property type="nucleotide sequence ID" value="NM_001406848.1"/>
</dbReference>
<dbReference type="RefSeq" id="NP_001393778.1">
    <molecule id="Q9Z0H4-9"/>
    <property type="nucleotide sequence ID" value="NM_001406849.1"/>
</dbReference>
<dbReference type="RefSeq" id="NP_001393787.1">
    <molecule id="Q9Z0H4-7"/>
    <property type="nucleotide sequence ID" value="NM_001406858.1"/>
</dbReference>
<dbReference type="RefSeq" id="NP_001393855.1">
    <molecule id="Q9Z0H4-4"/>
    <property type="nucleotide sequence ID" value="NM_001406926.1"/>
</dbReference>
<dbReference type="RefSeq" id="NP_001393856.1">
    <molecule id="Q9Z0H4-7"/>
    <property type="nucleotide sequence ID" value="NM_001406927.1"/>
</dbReference>
<dbReference type="RefSeq" id="NP_001393859.1">
    <molecule id="Q9Z0H4-5"/>
    <property type="nucleotide sequence ID" value="NM_001406930.1"/>
</dbReference>
<dbReference type="RefSeq" id="NP_001393860.1">
    <molecule id="Q9Z0H4-4"/>
    <property type="nucleotide sequence ID" value="NM_001406931.1"/>
</dbReference>
<dbReference type="RefSeq" id="NP_001393861.1">
    <molecule id="Q9Z0H4-7"/>
    <property type="nucleotide sequence ID" value="NM_001406932.1"/>
</dbReference>
<dbReference type="RefSeq" id="NP_001393862.1">
    <molecule id="Q9Z0H4-5"/>
    <property type="nucleotide sequence ID" value="NM_001406933.1"/>
</dbReference>
<dbReference type="RefSeq" id="NP_001393892.1">
    <molecule id="Q9Z0H4-7"/>
    <property type="nucleotide sequence ID" value="NM_001406963.1"/>
</dbReference>
<dbReference type="RefSeq" id="NP_001393893.1">
    <molecule id="Q9Z0H4-5"/>
    <property type="nucleotide sequence ID" value="NM_001406964.1"/>
</dbReference>
<dbReference type="RefSeq" id="NP_001393894.1">
    <molecule id="Q9Z0H4-5"/>
    <property type="nucleotide sequence ID" value="NM_001406965.1"/>
</dbReference>
<dbReference type="RefSeq" id="NP_001393897.1">
    <molecule id="Q9Z0H4-7"/>
    <property type="nucleotide sequence ID" value="NM_001406968.1"/>
</dbReference>
<dbReference type="RefSeq" id="NP_001393899.1">
    <molecule id="Q9Z0H4-4"/>
    <property type="nucleotide sequence ID" value="NM_001406970.1"/>
</dbReference>
<dbReference type="RefSeq" id="NP_001393900.1">
    <molecule id="Q9Z0H4-7"/>
    <property type="nucleotide sequence ID" value="NM_001406971.1"/>
</dbReference>
<dbReference type="RefSeq" id="NP_001393902.1">
    <molecule id="Q9Z0H4-7"/>
    <property type="nucleotide sequence ID" value="NM_001406973.1"/>
</dbReference>
<dbReference type="RefSeq" id="NP_001393903.1">
    <molecule id="Q9Z0H4-4"/>
    <property type="nucleotide sequence ID" value="NM_001406974.1"/>
</dbReference>
<dbReference type="RefSeq" id="NP_001393904.1">
    <molecule id="Q9Z0H4-7"/>
    <property type="nucleotide sequence ID" value="NM_001406975.1"/>
</dbReference>
<dbReference type="RefSeq" id="NP_001393906.1">
    <molecule id="Q9Z0H4-5"/>
    <property type="nucleotide sequence ID" value="NM_001406977.1"/>
</dbReference>
<dbReference type="RefSeq" id="NP_001393908.1">
    <molecule id="Q9Z0H4-5"/>
    <property type="nucleotide sequence ID" value="NM_001406979.1"/>
</dbReference>
<dbReference type="RefSeq" id="NP_001393909.1">
    <molecule id="Q9Z0H4-7"/>
    <property type="nucleotide sequence ID" value="NM_001406980.1"/>
</dbReference>
<dbReference type="RefSeq" id="NP_034290.2">
    <property type="nucleotide sequence ID" value="NM_010160.2"/>
</dbReference>
<dbReference type="RefSeq" id="XP_006497400.1">
    <property type="nucleotide sequence ID" value="XM_006497337.3"/>
</dbReference>
<dbReference type="RefSeq" id="XP_017170933.1">
    <property type="nucleotide sequence ID" value="XM_017315444.1"/>
</dbReference>
<dbReference type="RefSeq" id="XP_017170953.1">
    <property type="nucleotide sequence ID" value="XM_017315464.1"/>
</dbReference>
<dbReference type="RefSeq" id="XP_036014128.1">
    <molecule id="Q9Z0H4-6"/>
    <property type="nucleotide sequence ID" value="XM_036158235.1"/>
</dbReference>
<dbReference type="RefSeq" id="XP_036014131.1">
    <molecule id="Q9Z0H4-2"/>
    <property type="nucleotide sequence ID" value="XM_036158238.1"/>
</dbReference>
<dbReference type="SMR" id="Q9Z0H4"/>
<dbReference type="BioGRID" id="199537">
    <property type="interactions" value="1"/>
</dbReference>
<dbReference type="FunCoup" id="Q9Z0H4">
    <property type="interactions" value="1396"/>
</dbReference>
<dbReference type="STRING" id="10090.ENSMUSP00000110574"/>
<dbReference type="iPTMnet" id="Q9Z0H4"/>
<dbReference type="PhosphoSitePlus" id="Q9Z0H4"/>
<dbReference type="SwissPalm" id="Q9Z0H4"/>
<dbReference type="jPOST" id="Q9Z0H4"/>
<dbReference type="PaxDb" id="10090-ENSMUSP00000110584"/>
<dbReference type="PeptideAtlas" id="Q9Z0H4"/>
<dbReference type="ProteomicsDB" id="281169">
    <molecule id="Q9Z0H4-1"/>
</dbReference>
<dbReference type="ProteomicsDB" id="281170">
    <molecule id="Q9Z0H4-2"/>
</dbReference>
<dbReference type="ProteomicsDB" id="281171">
    <molecule id="Q9Z0H4-3"/>
</dbReference>
<dbReference type="ProteomicsDB" id="281172">
    <molecule id="Q9Z0H4-4"/>
</dbReference>
<dbReference type="ProteomicsDB" id="281173">
    <molecule id="Q9Z0H4-5"/>
</dbReference>
<dbReference type="ProteomicsDB" id="281174">
    <molecule id="Q9Z0H4-6"/>
</dbReference>
<dbReference type="ProteomicsDB" id="281175">
    <molecule id="Q9Z0H4-7"/>
</dbReference>
<dbReference type="ProteomicsDB" id="281176">
    <molecule id="Q9Z0H4-8"/>
</dbReference>
<dbReference type="ProteomicsDB" id="281177">
    <molecule id="Q9Z0H4-9"/>
</dbReference>
<dbReference type="ProteomicsDB" id="281178">
    <molecule id="Q9Z0H4-11"/>
</dbReference>
<dbReference type="Pumba" id="Q9Z0H4"/>
<dbReference type="Antibodypedia" id="5602">
    <property type="antibodies" value="235 antibodies from 29 providers"/>
</dbReference>
<dbReference type="DNASU" id="14007"/>
<dbReference type="Ensembl" id="ENSMUST00000002176.13">
    <molecule id="Q9Z0H4-7"/>
    <property type="protein sequence ID" value="ENSMUSP00000002176.6"/>
    <property type="gene ID" value="ENSMUSG00000002107.20"/>
</dbReference>
<dbReference type="Ensembl" id="ENSMUST00000100429.11">
    <molecule id="Q9Z0H4-7"/>
    <property type="protein sequence ID" value="ENSMUSP00000097996.5"/>
    <property type="gene ID" value="ENSMUSG00000002107.20"/>
</dbReference>
<dbReference type="Ensembl" id="ENSMUST00000114924.10">
    <molecule id="Q9Z0H4-9"/>
    <property type="protein sequence ID" value="ENSMUSP00000110574.4"/>
    <property type="gene ID" value="ENSMUSG00000002107.20"/>
</dbReference>
<dbReference type="Ensembl" id="ENSMUST00000114927.9">
    <molecule id="Q9Z0H4-5"/>
    <property type="protein sequence ID" value="ENSMUSP00000110577.2"/>
    <property type="gene ID" value="ENSMUSG00000002107.20"/>
</dbReference>
<dbReference type="Ensembl" id="ENSMUST00000114934.11">
    <molecule id="Q9Z0H4-9"/>
    <property type="protein sequence ID" value="ENSMUSP00000110584.4"/>
    <property type="gene ID" value="ENSMUSG00000002107.20"/>
</dbReference>
<dbReference type="Ensembl" id="ENSMUST00000142941.8">
    <molecule id="Q9Z0H4-4"/>
    <property type="protein sequence ID" value="ENSMUSP00000120459.3"/>
    <property type="gene ID" value="ENSMUSG00000002107.20"/>
</dbReference>
<dbReference type="Ensembl" id="ENSMUST00000150624.9">
    <molecule id="Q9Z0H4-5"/>
    <property type="protein sequence ID" value="ENSMUSP00000138297.2"/>
    <property type="gene ID" value="ENSMUSG00000002107.20"/>
</dbReference>
<dbReference type="Ensembl" id="ENSMUST00000182706.8">
    <molecule id="Q9Z0H4-2"/>
    <property type="protein sequence ID" value="ENSMUSP00000138764.2"/>
    <property type="gene ID" value="ENSMUSG00000002107.20"/>
</dbReference>
<dbReference type="Ensembl" id="ENSMUST00000182851.8">
    <molecule id="Q9Z0H4-1"/>
    <property type="protein sequence ID" value="ENSMUSP00000138363.2"/>
    <property type="gene ID" value="ENSMUSG00000002107.20"/>
</dbReference>
<dbReference type="GeneID" id="14007"/>
<dbReference type="KEGG" id="mmu:14007"/>
<dbReference type="UCSC" id="uc008ign.2">
    <molecule id="Q9Z0H4-3"/>
    <property type="organism name" value="mouse"/>
</dbReference>
<dbReference type="UCSC" id="uc008igp.2">
    <molecule id="Q9Z0H4-4"/>
    <property type="organism name" value="mouse"/>
</dbReference>
<dbReference type="UCSC" id="uc008igq.3">
    <molecule id="Q9Z0H4-11"/>
    <property type="organism name" value="mouse"/>
</dbReference>
<dbReference type="UCSC" id="uc008igr.3">
    <molecule id="Q9Z0H4-9"/>
    <property type="organism name" value="mouse"/>
</dbReference>
<dbReference type="UCSC" id="uc008igs.3">
    <molecule id="Q9Z0H4-2"/>
    <property type="organism name" value="mouse"/>
</dbReference>
<dbReference type="UCSC" id="uc008igt.3">
    <molecule id="Q9Z0H4-6"/>
    <property type="organism name" value="mouse"/>
</dbReference>
<dbReference type="UCSC" id="uc008igv.3">
    <molecule id="Q9Z0H4-1"/>
    <property type="organism name" value="mouse"/>
</dbReference>
<dbReference type="AGR" id="MGI:1338822"/>
<dbReference type="CTD" id="10659"/>
<dbReference type="MGI" id="MGI:1338822">
    <property type="gene designation" value="Celf2"/>
</dbReference>
<dbReference type="VEuPathDB" id="HostDB:ENSMUSG00000002107"/>
<dbReference type="eggNOG" id="KOG0144">
    <property type="taxonomic scope" value="Eukaryota"/>
</dbReference>
<dbReference type="GeneTree" id="ENSGT00940000155461"/>
<dbReference type="HOGENOM" id="CLU_015367_0_2_1"/>
<dbReference type="InParanoid" id="Q9Z0H4"/>
<dbReference type="OMA" id="PWKQYFS"/>
<dbReference type="PhylomeDB" id="Q9Z0H4"/>
<dbReference type="TreeFam" id="TF314924"/>
<dbReference type="BioGRID-ORCS" id="14007">
    <property type="hits" value="0 hits in 77 CRISPR screens"/>
</dbReference>
<dbReference type="CD-CODE" id="CE726F99">
    <property type="entry name" value="Postsynaptic density"/>
</dbReference>
<dbReference type="ChiTaRS" id="Celf2">
    <property type="organism name" value="mouse"/>
</dbReference>
<dbReference type="PRO" id="PR:Q9Z0H4"/>
<dbReference type="Proteomes" id="UP000000589">
    <property type="component" value="Chromosome 2"/>
</dbReference>
<dbReference type="RNAct" id="Q9Z0H4">
    <property type="molecule type" value="protein"/>
</dbReference>
<dbReference type="Bgee" id="ENSMUSG00000002107">
    <property type="expression patterns" value="Expressed in rostral migratory stream and 261 other cell types or tissues"/>
</dbReference>
<dbReference type="ExpressionAtlas" id="Q9Z0H4">
    <property type="expression patterns" value="baseline and differential"/>
</dbReference>
<dbReference type="GO" id="GO:0005737">
    <property type="term" value="C:cytoplasm"/>
    <property type="evidence" value="ECO:0000314"/>
    <property type="project" value="MGI"/>
</dbReference>
<dbReference type="GO" id="GO:0005634">
    <property type="term" value="C:nucleus"/>
    <property type="evidence" value="ECO:0000314"/>
    <property type="project" value="MGI"/>
</dbReference>
<dbReference type="GO" id="GO:1990904">
    <property type="term" value="C:ribonucleoprotein complex"/>
    <property type="evidence" value="ECO:0007669"/>
    <property type="project" value="InterPro"/>
</dbReference>
<dbReference type="GO" id="GO:0106222">
    <property type="term" value="F:lncRNA binding"/>
    <property type="evidence" value="ECO:0000353"/>
    <property type="project" value="MGI"/>
</dbReference>
<dbReference type="GO" id="GO:0006376">
    <property type="term" value="P:mRNA splice site recognition"/>
    <property type="evidence" value="ECO:0000314"/>
    <property type="project" value="MGI"/>
</dbReference>
<dbReference type="CDD" id="cd12631">
    <property type="entry name" value="RRM1_CELF1_2_Bruno"/>
    <property type="match status" value="1"/>
</dbReference>
<dbReference type="CDD" id="cd12634">
    <property type="entry name" value="RRM2_CELF1_2"/>
    <property type="match status" value="1"/>
</dbReference>
<dbReference type="CDD" id="cd12638">
    <property type="entry name" value="RRM3_CELF1_2"/>
    <property type="match status" value="1"/>
</dbReference>
<dbReference type="FunFam" id="3.30.70.330:FF:000013">
    <property type="entry name" value="CUGBP Elav-like family member 1 isoform 2"/>
    <property type="match status" value="1"/>
</dbReference>
<dbReference type="FunFam" id="3.30.70.330:FF:000015">
    <property type="entry name" value="CUGBP Elav-like family member 1 isoform 2"/>
    <property type="match status" value="1"/>
</dbReference>
<dbReference type="FunFam" id="3.30.70.330:FF:000016">
    <property type="entry name" value="CUGBP Elav-like family member 1 isoform 2"/>
    <property type="match status" value="1"/>
</dbReference>
<dbReference type="Gene3D" id="3.30.70.330">
    <property type="match status" value="3"/>
</dbReference>
<dbReference type="InterPro" id="IPR034196">
    <property type="entry name" value="CELF1/2_RRM1"/>
</dbReference>
<dbReference type="InterPro" id="IPR034198">
    <property type="entry name" value="CELF1/2_RRM2"/>
</dbReference>
<dbReference type="InterPro" id="IPR034199">
    <property type="entry name" value="CELF1/2_RRM3"/>
</dbReference>
<dbReference type="InterPro" id="IPR002343">
    <property type="entry name" value="Hud_Sxl_RNA"/>
</dbReference>
<dbReference type="InterPro" id="IPR012677">
    <property type="entry name" value="Nucleotide-bd_a/b_plait_sf"/>
</dbReference>
<dbReference type="InterPro" id="IPR035979">
    <property type="entry name" value="RBD_domain_sf"/>
</dbReference>
<dbReference type="InterPro" id="IPR000504">
    <property type="entry name" value="RRM_dom"/>
</dbReference>
<dbReference type="PANTHER" id="PTHR24012">
    <property type="entry name" value="RNA BINDING PROTEIN"/>
    <property type="match status" value="1"/>
</dbReference>
<dbReference type="Pfam" id="PF00076">
    <property type="entry name" value="RRM_1"/>
    <property type="match status" value="3"/>
</dbReference>
<dbReference type="PRINTS" id="PR00961">
    <property type="entry name" value="HUDSXLRNA"/>
</dbReference>
<dbReference type="SMART" id="SM00360">
    <property type="entry name" value="RRM"/>
    <property type="match status" value="3"/>
</dbReference>
<dbReference type="SUPFAM" id="SSF54928">
    <property type="entry name" value="RNA-binding domain, RBD"/>
    <property type="match status" value="2"/>
</dbReference>
<dbReference type="PROSITE" id="PS50102">
    <property type="entry name" value="RRM"/>
    <property type="match status" value="3"/>
</dbReference>
<gene>
    <name type="primary">Celf2</name>
    <name type="synonym">Cugbp2</name>
    <name type="synonym">Napor</name>
</gene>
<sequence length="508" mass="54271">MRCPKSAVTMRNEELLLSNGTANKMNGALDHSDQPDPDAIKMFVGQIPRSWSEKELKELFEPYGAVYQINVLRDRSQNPPQSKGCCFVTFYTRKAALEAQNALHNIKTLPGMHHPIQMKPADSEKSNAVEDRKLFIGMVSKKCNENDIRVMFSPFGQIEECRILRGPDGLSRGCAFVTFSTRAMAQNAIKAMHQSQTMEGCSSPIVVKFADTQKDKEQRRLQQQLAQQMQQLNTATWGNLTGLGGLTPQYLALLQQATSSSNLGAFSGIQQMAGMNALQLQNLATLAAAAAAAQTSATSTNANPLSSTSSALGALTSPVAASTPNSTAGAAMNSLTSLGTLQGLAGATVGLNNINALAGMAALNGGLGATGLTNGTAGTMDALTQAYSGIQQYAAAALPTLYSQSLLQQQSAAGSQKEGPEGANLFIYHLPQEFGDQDILQMFMPFGNVISAKVFIDKQTNLSKCFGFVSYDNPVSAQAAIQAMNGFQIGMKRLKVQLKRSKNDSKPY</sequence>
<organism>
    <name type="scientific">Mus musculus</name>
    <name type="common">Mouse</name>
    <dbReference type="NCBI Taxonomy" id="10090"/>
    <lineage>
        <taxon>Eukaryota</taxon>
        <taxon>Metazoa</taxon>
        <taxon>Chordata</taxon>
        <taxon>Craniata</taxon>
        <taxon>Vertebrata</taxon>
        <taxon>Euteleostomi</taxon>
        <taxon>Mammalia</taxon>
        <taxon>Eutheria</taxon>
        <taxon>Euarchontoglires</taxon>
        <taxon>Glires</taxon>
        <taxon>Rodentia</taxon>
        <taxon>Myomorpha</taxon>
        <taxon>Muroidea</taxon>
        <taxon>Muridae</taxon>
        <taxon>Murinae</taxon>
        <taxon>Mus</taxon>
        <taxon>Mus</taxon>
    </lineage>
</organism>
<accession>Q9Z0H4</accession>
<accession>A2AS10</accession>
<accession>A2AS11</accession>
<accession>A2AS15</accession>
<accession>Q3TNX4</accession>
<accession>Q3TTI4</accession>
<accession>Q3TUB8</accession>
<accession>Q3U668</accession>
<accession>Q3U7J8</accession>
<accession>Q3U9F2</accession>
<accession>Q3UVH4</accession>
<accession>Q9R0B2</accession>
<accession>Q9Z187</accession>
<evidence type="ECO:0000250" key="1"/>
<evidence type="ECO:0000250" key="2">
    <source>
        <dbReference type="UniProtKB" id="O95319"/>
    </source>
</evidence>
<evidence type="ECO:0000255" key="3">
    <source>
        <dbReference type="PROSITE-ProRule" id="PRU00176"/>
    </source>
</evidence>
<evidence type="ECO:0000269" key="4">
    <source>
    </source>
</evidence>
<evidence type="ECO:0000269" key="5">
    <source>
    </source>
</evidence>
<evidence type="ECO:0000269" key="6">
    <source>
    </source>
</evidence>
<evidence type="ECO:0000269" key="7">
    <source>
    </source>
</evidence>
<evidence type="ECO:0000269" key="8">
    <source>
    </source>
</evidence>
<evidence type="ECO:0000269" key="9">
    <source>
    </source>
</evidence>
<evidence type="ECO:0000303" key="10">
    <source>
    </source>
</evidence>
<evidence type="ECO:0000303" key="11">
    <source>
    </source>
</evidence>
<evidence type="ECO:0000303" key="12">
    <source>
    </source>
</evidence>
<evidence type="ECO:0000305" key="13"/>
<feature type="chain" id="PRO_0000295190" description="CUGBP Elav-like family member 2">
    <location>
        <begin position="1"/>
        <end position="508"/>
    </location>
</feature>
<feature type="domain" description="RRM 1" evidence="3">
    <location>
        <begin position="40"/>
        <end position="123"/>
    </location>
</feature>
<feature type="domain" description="RRM 2" evidence="3">
    <location>
        <begin position="132"/>
        <end position="212"/>
    </location>
</feature>
<feature type="domain" description="RRM 3" evidence="3">
    <location>
        <begin position="423"/>
        <end position="501"/>
    </location>
</feature>
<feature type="region of interest" description="Necessary for RNA-binding, TNNT2 exon 5 and NMDA R1 exon 21 inclusion" evidence="1">
    <location>
        <begin position="1"/>
        <end position="283"/>
    </location>
</feature>
<feature type="region of interest" description="Necessary for RNA-binding, TNNT2 exon 5 and NMDA R1 exon 21 inclusion" evidence="1">
    <location>
        <begin position="357"/>
        <end position="508"/>
    </location>
</feature>
<feature type="splice variant" id="VSP_026801" description="In isoform 3." evidence="11">
    <location>
        <begin position="1"/>
        <end position="274"/>
    </location>
</feature>
<feature type="splice variant" id="VSP_026802" description="In isoform 4, isoform 5 and isoform 7." evidence="10 11 12">
    <location>
        <begin position="1"/>
        <end position="24"/>
    </location>
</feature>
<feature type="splice variant" id="VSP_026803" description="In isoform 2 and isoform 6." evidence="11">
    <original>MRCPKSAVTMRNEELLL</original>
    <variation>MVSLISDLDSLRGWKALRETATELSGSPP</variation>
    <location>
        <begin position="1"/>
        <end position="17"/>
    </location>
</feature>
<feature type="splice variant" id="VSP_026804" description="In isoform 9." evidence="13">
    <original>M</original>
    <variation>MFERTSELAFVETISVESM</variation>
    <location>
        <position position="1"/>
    </location>
</feature>
<feature type="splice variant" id="VSP_026805" description="In isoform 4." evidence="11">
    <original>A</original>
    <variation>AVAQMLS</variation>
    <location>
        <position position="358"/>
    </location>
</feature>
<feature type="splice variant" id="VSP_026806" description="In isoform 3, isoform 5, isoform 6, isoform 8 and isoform 11." evidence="11">
    <original>G</original>
    <variation>GTINS</variation>
    <location>
        <position position="359"/>
    </location>
</feature>
<feature type="splice variant" id="VSP_026808" description="In isoform 11." evidence="11">
    <location>
        <begin position="419"/>
        <end position="466"/>
    </location>
</feature>
<feature type="sequence conflict" description="In Ref. 2; CAA77110." evidence="13" ref="2">
    <original>Q</original>
    <variation>K</variation>
    <location>
        <position position="218"/>
    </location>
</feature>
<feature type="sequence conflict" description="In Ref. 2; CAA77110." evidence="13" ref="2">
    <original>G</original>
    <variation>E</variation>
    <location>
        <position position="245"/>
    </location>
</feature>
<feature type="sequence conflict" description="In Ref. 3; BAE30715/BAE31857." evidence="13" ref="3">
    <original>P</original>
    <variation>T</variation>
    <location>
        <position position="420"/>
    </location>
</feature>
<name>CELF2_MOUSE</name>
<proteinExistence type="evidence at protein level"/>
<keyword id="KW-0025">Alternative splicing</keyword>
<keyword id="KW-0963">Cytoplasm</keyword>
<keyword id="KW-0903">Direct protein sequencing</keyword>
<keyword id="KW-0507">mRNA processing</keyword>
<keyword id="KW-0539">Nucleus</keyword>
<keyword id="KW-1185">Reference proteome</keyword>
<keyword id="KW-0677">Repeat</keyword>
<keyword id="KW-0678">Repressor</keyword>
<keyword id="KW-0694">RNA-binding</keyword>